<name>EIF3E_BOMMO</name>
<dbReference type="EMBL" id="DQ667966">
    <property type="protein sequence ID" value="ABG73409.1"/>
    <property type="molecule type" value="mRNA"/>
</dbReference>
<dbReference type="EMBL" id="DQ311355">
    <property type="protein sequence ID" value="ABD36299.1"/>
    <property type="molecule type" value="mRNA"/>
</dbReference>
<dbReference type="RefSeq" id="NP_001037404.1">
    <property type="nucleotide sequence ID" value="NM_001043939.1"/>
</dbReference>
<dbReference type="SMR" id="Q2F5R8"/>
<dbReference type="FunCoup" id="Q2F5R8">
    <property type="interactions" value="2074"/>
</dbReference>
<dbReference type="STRING" id="7091.Q2F5R8"/>
<dbReference type="PaxDb" id="7091-BGIBMGA003669-TA"/>
<dbReference type="EnsemblMetazoa" id="NM_001043939.1">
    <property type="protein sequence ID" value="NP_001037404.1"/>
    <property type="gene ID" value="LOC692936"/>
</dbReference>
<dbReference type="GeneID" id="692936"/>
<dbReference type="KEGG" id="bmor:692936"/>
<dbReference type="CTD" id="3646"/>
<dbReference type="eggNOG" id="KOG2758">
    <property type="taxonomic scope" value="Eukaryota"/>
</dbReference>
<dbReference type="HOGENOM" id="CLU_031132_0_0_1"/>
<dbReference type="InParanoid" id="Q2F5R8"/>
<dbReference type="OrthoDB" id="196446at7088"/>
<dbReference type="Proteomes" id="UP000005204">
    <property type="component" value="Unassembled WGS sequence"/>
</dbReference>
<dbReference type="GO" id="GO:0016282">
    <property type="term" value="C:eukaryotic 43S preinitiation complex"/>
    <property type="evidence" value="ECO:0007669"/>
    <property type="project" value="UniProtKB-UniRule"/>
</dbReference>
<dbReference type="GO" id="GO:0033290">
    <property type="term" value="C:eukaryotic 48S preinitiation complex"/>
    <property type="evidence" value="ECO:0007669"/>
    <property type="project" value="UniProtKB-UniRule"/>
</dbReference>
<dbReference type="GO" id="GO:0071540">
    <property type="term" value="C:eukaryotic translation initiation factor 3 complex, eIF3e"/>
    <property type="evidence" value="ECO:0007669"/>
    <property type="project" value="UniProtKB-UniRule"/>
</dbReference>
<dbReference type="GO" id="GO:0003743">
    <property type="term" value="F:translation initiation factor activity"/>
    <property type="evidence" value="ECO:0007669"/>
    <property type="project" value="UniProtKB-UniRule"/>
</dbReference>
<dbReference type="GO" id="GO:0001732">
    <property type="term" value="P:formation of cytoplasmic translation initiation complex"/>
    <property type="evidence" value="ECO:0007669"/>
    <property type="project" value="UniProtKB-UniRule"/>
</dbReference>
<dbReference type="CDD" id="cd21378">
    <property type="entry name" value="eIF3E"/>
    <property type="match status" value="1"/>
</dbReference>
<dbReference type="HAMAP" id="MF_03004">
    <property type="entry name" value="eIF3e"/>
    <property type="match status" value="1"/>
</dbReference>
<dbReference type="InterPro" id="IPR016650">
    <property type="entry name" value="eIF3e"/>
</dbReference>
<dbReference type="InterPro" id="IPR019010">
    <property type="entry name" value="eIF3e_N"/>
</dbReference>
<dbReference type="InterPro" id="IPR000717">
    <property type="entry name" value="PCI_dom"/>
</dbReference>
<dbReference type="InterPro" id="IPR036390">
    <property type="entry name" value="WH_DNA-bd_sf"/>
</dbReference>
<dbReference type="PANTHER" id="PTHR10317">
    <property type="entry name" value="EUKARYOTIC TRANSLATION INITIATION FACTOR 3 SUBUNIT E"/>
    <property type="match status" value="1"/>
</dbReference>
<dbReference type="Pfam" id="PF09440">
    <property type="entry name" value="eIF3_N"/>
    <property type="match status" value="1"/>
</dbReference>
<dbReference type="Pfam" id="PF01399">
    <property type="entry name" value="PCI"/>
    <property type="match status" value="1"/>
</dbReference>
<dbReference type="PIRSF" id="PIRSF016255">
    <property type="entry name" value="eIF3e_su6"/>
    <property type="match status" value="1"/>
</dbReference>
<dbReference type="SMART" id="SM01186">
    <property type="entry name" value="eIF3_N"/>
    <property type="match status" value="1"/>
</dbReference>
<dbReference type="SMART" id="SM00088">
    <property type="entry name" value="PINT"/>
    <property type="match status" value="1"/>
</dbReference>
<dbReference type="SUPFAM" id="SSF46785">
    <property type="entry name" value="Winged helix' DNA-binding domain"/>
    <property type="match status" value="1"/>
</dbReference>
<dbReference type="PROSITE" id="PS50250">
    <property type="entry name" value="PCI"/>
    <property type="match status" value="1"/>
</dbReference>
<sequence length="445" mass="52114">MSYSKFDLTFKIGQYLDRHLVFPLLEFLAAKETYDQSELLQAKLEILSKTNMIDYVTDIRRMLYPEEDTPEEIIQRRGVVLSELQELQDAVEPVLRLMQRDDVMKTIETMRDPKTLINHLSTNKEYEFKIEMIDSMYRLAKYRYECGNYVESASYLYFCQLVMSPTDKNYLSVLWGKLASEILVQNWDGALDDLTKLREFIDNGGAGSTASNMQALQQRTWLVHWSLFVFFNHVKGRDLIIEMFLYKPLYLNAIQTMCPHILRYLATAVIINRSRRNALKDLVKVIQQEAYTYRDPITEFIEHLYVNFDFEAARRKLNQCQAVLLTDFFLIACLEEFVENARLMIFETFCRIHQVISIGMLAENLNMQPDEAECWIVNLIRNARLDAKIDSKLGHVVMGAQPLSPYQQLVERIDSLAVRSEALTSLVERKHKARNQDIRWGAQEF</sequence>
<proteinExistence type="evidence at transcript level"/>
<comment type="function">
    <text evidence="1">Component of the eukaryotic translation initiation factor 3 (eIF-3) complex, which is involved in protein synthesis of a specialized repertoire of mRNAs and, together with other initiation factors, stimulates binding of mRNA and methionyl-tRNAi to the 40S ribosome. The eIF-3 complex specifically targets and initiates translation of a subset of mRNAs involved in cell proliferation.</text>
</comment>
<comment type="subunit">
    <text evidence="1">Component of the eukaryotic translation initiation factor 3 (eIF-3) complex.</text>
</comment>
<comment type="subcellular location">
    <subcellularLocation>
        <location evidence="1">Cytoplasm</location>
    </subcellularLocation>
</comment>
<comment type="similarity">
    <text evidence="1">Belongs to the eIF-3 subunit E family.</text>
</comment>
<reference key="1">
    <citation type="submission" date="2006-06" db="EMBL/GenBank/DDBJ databases">
        <title>Translation initiation factors in Bombyx mori.</title>
        <authorList>
            <person name="Wang L.-L."/>
            <person name="Chen K.-P."/>
            <person name="Yao Q."/>
        </authorList>
    </citation>
    <scope>NUCLEOTIDE SEQUENCE [MRNA]</scope>
</reference>
<reference key="2">
    <citation type="submission" date="2005-11" db="EMBL/GenBank/DDBJ databases">
        <title>Blast silkworm EST database for functional genes.</title>
        <authorList>
            <person name="Niu B.L."/>
            <person name="Meng Z.Q."/>
            <person name="Weng H.B."/>
            <person name="Shen W.F."/>
            <person name="He L.H."/>
            <person name="Zheng K.F."/>
            <person name="Ye S.T."/>
            <person name="Lin T.B."/>
            <person name="Chen J.E."/>
        </authorList>
    </citation>
    <scope>NUCLEOTIDE SEQUENCE [LARGE SCALE MRNA]</scope>
</reference>
<protein>
    <recommendedName>
        <fullName evidence="1">Eukaryotic translation initiation factor 3 subunit E</fullName>
        <shortName evidence="1">eIF3e</shortName>
    </recommendedName>
    <alternativeName>
        <fullName evidence="1">Eukaryotic translation initiation factor 3 subunit 6</fullName>
    </alternativeName>
</protein>
<feature type="chain" id="PRO_0000365961" description="Eukaryotic translation initiation factor 3 subunit E">
    <location>
        <begin position="1"/>
        <end position="445"/>
    </location>
</feature>
<feature type="domain" description="PCI" evidence="2">
    <location>
        <begin position="230"/>
        <end position="403"/>
    </location>
</feature>
<keyword id="KW-0963">Cytoplasm</keyword>
<keyword id="KW-0396">Initiation factor</keyword>
<keyword id="KW-0648">Protein biosynthesis</keyword>
<keyword id="KW-1185">Reference proteome</keyword>
<evidence type="ECO:0000255" key="1">
    <source>
        <dbReference type="HAMAP-Rule" id="MF_03004"/>
    </source>
</evidence>
<evidence type="ECO:0000255" key="2">
    <source>
        <dbReference type="PROSITE-ProRule" id="PRU01185"/>
    </source>
</evidence>
<organism>
    <name type="scientific">Bombyx mori</name>
    <name type="common">Silk moth</name>
    <dbReference type="NCBI Taxonomy" id="7091"/>
    <lineage>
        <taxon>Eukaryota</taxon>
        <taxon>Metazoa</taxon>
        <taxon>Ecdysozoa</taxon>
        <taxon>Arthropoda</taxon>
        <taxon>Hexapoda</taxon>
        <taxon>Insecta</taxon>
        <taxon>Pterygota</taxon>
        <taxon>Neoptera</taxon>
        <taxon>Endopterygota</taxon>
        <taxon>Lepidoptera</taxon>
        <taxon>Glossata</taxon>
        <taxon>Ditrysia</taxon>
        <taxon>Bombycoidea</taxon>
        <taxon>Bombycidae</taxon>
        <taxon>Bombycinae</taxon>
        <taxon>Bombyx</taxon>
    </lineage>
</organism>
<gene>
    <name type="primary">eIF3-S6</name>
</gene>
<accession>Q2F5R8</accession>